<protein>
    <recommendedName>
        <fullName>Helix-loop-helix protein 2</fullName>
        <shortName>HEN-2</shortName>
    </recommendedName>
    <alternativeName>
        <fullName>Nescient helix loop helix 2</fullName>
        <shortName>NSCL-2</shortName>
    </alternativeName>
</protein>
<reference key="1">
    <citation type="journal article" date="1992" name="Cell Growth Differ.">
        <title>NSCL-2: a basic domain helix-loop-helix gene expressed in early neurogenesis.</title>
        <authorList>
            <person name="Gobel V."/>
            <person name="Lipkowitz S."/>
            <person name="Kozak C.A."/>
            <person name="Kirsch I.R."/>
        </authorList>
    </citation>
    <scope>NUCLEOTIDE SEQUENCE [MRNA]</scope>
    <scope>TISSUE SPECIFICITY</scope>
    <scope>DEVELOPMENTAL STAGE</scope>
</reference>
<reference key="2">
    <citation type="journal article" date="2005" name="Science">
        <title>The transcriptional landscape of the mammalian genome.</title>
        <authorList>
            <person name="Carninci P."/>
            <person name="Kasukawa T."/>
            <person name="Katayama S."/>
            <person name="Gough J."/>
            <person name="Frith M.C."/>
            <person name="Maeda N."/>
            <person name="Oyama R."/>
            <person name="Ravasi T."/>
            <person name="Lenhard B."/>
            <person name="Wells C."/>
            <person name="Kodzius R."/>
            <person name="Shimokawa K."/>
            <person name="Bajic V.B."/>
            <person name="Brenner S.E."/>
            <person name="Batalov S."/>
            <person name="Forrest A.R."/>
            <person name="Zavolan M."/>
            <person name="Davis M.J."/>
            <person name="Wilming L.G."/>
            <person name="Aidinis V."/>
            <person name="Allen J.E."/>
            <person name="Ambesi-Impiombato A."/>
            <person name="Apweiler R."/>
            <person name="Aturaliya R.N."/>
            <person name="Bailey T.L."/>
            <person name="Bansal M."/>
            <person name="Baxter L."/>
            <person name="Beisel K.W."/>
            <person name="Bersano T."/>
            <person name="Bono H."/>
            <person name="Chalk A.M."/>
            <person name="Chiu K.P."/>
            <person name="Choudhary V."/>
            <person name="Christoffels A."/>
            <person name="Clutterbuck D.R."/>
            <person name="Crowe M.L."/>
            <person name="Dalla E."/>
            <person name="Dalrymple B.P."/>
            <person name="de Bono B."/>
            <person name="Della Gatta G."/>
            <person name="di Bernardo D."/>
            <person name="Down T."/>
            <person name="Engstrom P."/>
            <person name="Fagiolini M."/>
            <person name="Faulkner G."/>
            <person name="Fletcher C.F."/>
            <person name="Fukushima T."/>
            <person name="Furuno M."/>
            <person name="Futaki S."/>
            <person name="Gariboldi M."/>
            <person name="Georgii-Hemming P."/>
            <person name="Gingeras T.R."/>
            <person name="Gojobori T."/>
            <person name="Green R.E."/>
            <person name="Gustincich S."/>
            <person name="Harbers M."/>
            <person name="Hayashi Y."/>
            <person name="Hensch T.K."/>
            <person name="Hirokawa N."/>
            <person name="Hill D."/>
            <person name="Huminiecki L."/>
            <person name="Iacono M."/>
            <person name="Ikeo K."/>
            <person name="Iwama A."/>
            <person name="Ishikawa T."/>
            <person name="Jakt M."/>
            <person name="Kanapin A."/>
            <person name="Katoh M."/>
            <person name="Kawasawa Y."/>
            <person name="Kelso J."/>
            <person name="Kitamura H."/>
            <person name="Kitano H."/>
            <person name="Kollias G."/>
            <person name="Krishnan S.P."/>
            <person name="Kruger A."/>
            <person name="Kummerfeld S.K."/>
            <person name="Kurochkin I.V."/>
            <person name="Lareau L.F."/>
            <person name="Lazarevic D."/>
            <person name="Lipovich L."/>
            <person name="Liu J."/>
            <person name="Liuni S."/>
            <person name="McWilliam S."/>
            <person name="Madan Babu M."/>
            <person name="Madera M."/>
            <person name="Marchionni L."/>
            <person name="Matsuda H."/>
            <person name="Matsuzawa S."/>
            <person name="Miki H."/>
            <person name="Mignone F."/>
            <person name="Miyake S."/>
            <person name="Morris K."/>
            <person name="Mottagui-Tabar S."/>
            <person name="Mulder N."/>
            <person name="Nakano N."/>
            <person name="Nakauchi H."/>
            <person name="Ng P."/>
            <person name="Nilsson R."/>
            <person name="Nishiguchi S."/>
            <person name="Nishikawa S."/>
            <person name="Nori F."/>
            <person name="Ohara O."/>
            <person name="Okazaki Y."/>
            <person name="Orlando V."/>
            <person name="Pang K.C."/>
            <person name="Pavan W.J."/>
            <person name="Pavesi G."/>
            <person name="Pesole G."/>
            <person name="Petrovsky N."/>
            <person name="Piazza S."/>
            <person name="Reed J."/>
            <person name="Reid J.F."/>
            <person name="Ring B.Z."/>
            <person name="Ringwald M."/>
            <person name="Rost B."/>
            <person name="Ruan Y."/>
            <person name="Salzberg S.L."/>
            <person name="Sandelin A."/>
            <person name="Schneider C."/>
            <person name="Schoenbach C."/>
            <person name="Sekiguchi K."/>
            <person name="Semple C.A."/>
            <person name="Seno S."/>
            <person name="Sessa L."/>
            <person name="Sheng Y."/>
            <person name="Shibata Y."/>
            <person name="Shimada H."/>
            <person name="Shimada K."/>
            <person name="Silva D."/>
            <person name="Sinclair B."/>
            <person name="Sperling S."/>
            <person name="Stupka E."/>
            <person name="Sugiura K."/>
            <person name="Sultana R."/>
            <person name="Takenaka Y."/>
            <person name="Taki K."/>
            <person name="Tammoja K."/>
            <person name="Tan S.L."/>
            <person name="Tang S."/>
            <person name="Taylor M.S."/>
            <person name="Tegner J."/>
            <person name="Teichmann S.A."/>
            <person name="Ueda H.R."/>
            <person name="van Nimwegen E."/>
            <person name="Verardo R."/>
            <person name="Wei C.L."/>
            <person name="Yagi K."/>
            <person name="Yamanishi H."/>
            <person name="Zabarovsky E."/>
            <person name="Zhu S."/>
            <person name="Zimmer A."/>
            <person name="Hide W."/>
            <person name="Bult C."/>
            <person name="Grimmond S.M."/>
            <person name="Teasdale R.D."/>
            <person name="Liu E.T."/>
            <person name="Brusic V."/>
            <person name="Quackenbush J."/>
            <person name="Wahlestedt C."/>
            <person name="Mattick J.S."/>
            <person name="Hume D.A."/>
            <person name="Kai C."/>
            <person name="Sasaki D."/>
            <person name="Tomaru Y."/>
            <person name="Fukuda S."/>
            <person name="Kanamori-Katayama M."/>
            <person name="Suzuki M."/>
            <person name="Aoki J."/>
            <person name="Arakawa T."/>
            <person name="Iida J."/>
            <person name="Imamura K."/>
            <person name="Itoh M."/>
            <person name="Kato T."/>
            <person name="Kawaji H."/>
            <person name="Kawagashira N."/>
            <person name="Kawashima T."/>
            <person name="Kojima M."/>
            <person name="Kondo S."/>
            <person name="Konno H."/>
            <person name="Nakano K."/>
            <person name="Ninomiya N."/>
            <person name="Nishio T."/>
            <person name="Okada M."/>
            <person name="Plessy C."/>
            <person name="Shibata K."/>
            <person name="Shiraki T."/>
            <person name="Suzuki S."/>
            <person name="Tagami M."/>
            <person name="Waki K."/>
            <person name="Watahiki A."/>
            <person name="Okamura-Oho Y."/>
            <person name="Suzuki H."/>
            <person name="Kawai J."/>
            <person name="Hayashizaki Y."/>
        </authorList>
    </citation>
    <scope>NUCLEOTIDE SEQUENCE [LARGE SCALE MRNA]</scope>
    <source>
        <strain>C57BL/6J</strain>
        <tissue>Cerebellum</tissue>
        <tissue>Embryo</tissue>
        <tissue>Eye</tissue>
        <tissue>Head</tissue>
    </source>
</reference>
<reference key="3">
    <citation type="journal article" date="2009" name="PLoS Biol.">
        <title>Lineage-specific biology revealed by a finished genome assembly of the mouse.</title>
        <authorList>
            <person name="Church D.M."/>
            <person name="Goodstadt L."/>
            <person name="Hillier L.W."/>
            <person name="Zody M.C."/>
            <person name="Goldstein S."/>
            <person name="She X."/>
            <person name="Bult C.J."/>
            <person name="Agarwala R."/>
            <person name="Cherry J.L."/>
            <person name="DiCuccio M."/>
            <person name="Hlavina W."/>
            <person name="Kapustin Y."/>
            <person name="Meric P."/>
            <person name="Maglott D."/>
            <person name="Birtle Z."/>
            <person name="Marques A.C."/>
            <person name="Graves T."/>
            <person name="Zhou S."/>
            <person name="Teague B."/>
            <person name="Potamousis K."/>
            <person name="Churas C."/>
            <person name="Place M."/>
            <person name="Herschleb J."/>
            <person name="Runnheim R."/>
            <person name="Forrest D."/>
            <person name="Amos-Landgraf J."/>
            <person name="Schwartz D.C."/>
            <person name="Cheng Z."/>
            <person name="Lindblad-Toh K."/>
            <person name="Eichler E.E."/>
            <person name="Ponting C.P."/>
        </authorList>
    </citation>
    <scope>NUCLEOTIDE SEQUENCE [LARGE SCALE GENOMIC DNA]</scope>
    <source>
        <strain>C57BL/6J</strain>
    </source>
</reference>
<reference key="4">
    <citation type="submission" date="2005-07" db="EMBL/GenBank/DDBJ databases">
        <authorList>
            <person name="Mural R.J."/>
            <person name="Adams M.D."/>
            <person name="Myers E.W."/>
            <person name="Smith H.O."/>
            <person name="Venter J.C."/>
        </authorList>
    </citation>
    <scope>NUCLEOTIDE SEQUENCE [LARGE SCALE GENOMIC DNA]</scope>
</reference>
<reference key="5">
    <citation type="journal article" date="2004" name="Genome Res.">
        <title>The status, quality, and expansion of the NIH full-length cDNA project: the Mammalian Gene Collection (MGC).</title>
        <authorList>
            <consortium name="The MGC Project Team"/>
        </authorList>
    </citation>
    <scope>NUCLEOTIDE SEQUENCE [LARGE SCALE MRNA]</scope>
    <source>
        <strain>C57BL/6J</strain>
        <tissue>Brain</tissue>
    </source>
</reference>
<reference key="6">
    <citation type="journal article" date="1996" name="Brain Res. Mol. Brain Res.">
        <title>Transient expression of the basic helix-loop-helix protein NSCL-2 in the mouse cerebellum during postnatal development.</title>
        <authorList>
            <person name="Haire M.F."/>
            <person name="Chiaramello A."/>
        </authorList>
    </citation>
    <scope>TISSUE SPECIFICITY</scope>
</reference>
<reference key="7">
    <citation type="journal article" date="1997" name="Nat. Genet.">
        <title>Hypogonadism and obesity in mice with a targeted deletion of the Nhlh2 gene.</title>
        <authorList>
            <person name="Good D.J."/>
            <person name="Porter F.D."/>
            <person name="Mahon K.A."/>
            <person name="Parlow A.F."/>
            <person name="Westphal H."/>
            <person name="Kirsch I.R."/>
        </authorList>
    </citation>
    <scope>FUNCTION</scope>
    <scope>TISSUE SPECIFICITY</scope>
    <scope>DEVELOPMENTAL STAGE</scope>
    <scope>DISRUPTION PHENOTYPE</scope>
</reference>
<reference key="8">
    <citation type="journal article" date="2002" name="Physiol. Behav.">
        <title>Reduced voluntary activity precedes adult-onset obesity in Nhlh2 knockout mice.</title>
        <authorList>
            <person name="Coyle C.A."/>
            <person name="Jing E."/>
            <person name="Hosmer T."/>
            <person name="Powers J.B."/>
            <person name="Wade G."/>
            <person name="Good D.J."/>
        </authorList>
    </citation>
    <scope>FUNCTION</scope>
    <scope>DISRUPTION PHENOTYPE</scope>
</reference>
<reference key="9">
    <citation type="journal article" date="2004" name="EMBO J.">
        <title>NSCL-1 and NSCL-2 synergistically determine the fate of GnRH-1 neurons and control necdin gene expression.</title>
        <authorList>
            <person name="Krueger M."/>
            <person name="Ruschke K."/>
            <person name="Braun T."/>
        </authorList>
    </citation>
    <scope>FUNCTION</scope>
    <scope>DEVELOPMENTAL STAGE</scope>
    <scope>DISRUPTION PHENOTYPE</scope>
</reference>
<reference key="10">
    <citation type="journal article" date="2004" name="Horm. Behav.">
        <title>The Nhlh2 transcription factor is required for female sexual behavior and reproductive longevity.</title>
        <authorList>
            <person name="Johnson S.A."/>
            <person name="Marin-Bivens C.L."/>
            <person name="Miele M."/>
            <person name="Coyle C.A."/>
            <person name="Fissore R."/>
            <person name="Good D.J."/>
        </authorList>
    </citation>
    <scope>FUNCTION</scope>
    <scope>DISRUPTION PHENOTYPE</scope>
</reference>
<reference key="11">
    <citation type="journal article" date="2007" name="J. Neurochem.">
        <title>NSCL-1 and -2 control the formation of precerebellar nuclei by orchestrating the migration of neuronal precursor cells.</title>
        <authorList>
            <person name="Schmid T."/>
            <person name="Krueger M."/>
            <person name="Braun T."/>
        </authorList>
    </citation>
    <scope>FUNCTION</scope>
    <scope>DEVELOPMENTAL STAGE</scope>
    <scope>DISRUPTION PHENOTYPE</scope>
</reference>
<reference key="12">
    <citation type="journal article" date="2007" name="Mol. Endocrinol.">
        <title>Pubertal impairment in Nhlh2 null mice is associated with hypothalamic and pituitary deficiencies.</title>
        <authorList>
            <person name="Cogliati T."/>
            <person name="Delgado-Romero P."/>
            <person name="Norwitz E.R."/>
            <person name="Guduric-Fuchs J."/>
            <person name="Kaiser U.B."/>
            <person name="Wray S."/>
            <person name="Kirsch I.R."/>
        </authorList>
    </citation>
    <scope>FUNCTION</scope>
    <scope>DISRUPTION PHENOTYPE</scope>
</reference>
<reference key="13">
    <citation type="journal article" date="2008" name="Mol. Endocrinol.">
        <title>Nescient helix-loop-helix 2 interacts with signal transducer and activator of transcription 3 to regulate transcription of prohormone convertase 1/3.</title>
        <authorList>
            <person name="Fox D.L."/>
            <person name="Good D.J."/>
        </authorList>
    </citation>
    <scope>FUNCTION</scope>
    <scope>INTERACTION WITH STAT3</scope>
    <scope>DISRUPTION PHENOTYPE</scope>
</reference>
<reference key="14">
    <citation type="journal article" date="2009" name="PLoS ONE">
        <title>Defective peripheral nerve development is linked to abnormal architecture and metabolic activity of adipose tissue in Nscl-2 mutant mice.</title>
        <authorList>
            <person name="Ruschke K."/>
            <person name="Ebelt H."/>
            <person name="Kloeting N."/>
            <person name="Boettger T."/>
            <person name="Raum K."/>
            <person name="Blueher M."/>
            <person name="Braun T."/>
        </authorList>
    </citation>
    <scope>FUNCTION</scope>
    <scope>DISRUPTION PHENOTYPE</scope>
</reference>
<reference key="15">
    <citation type="journal article" date="2010" name="PLoS ONE">
        <title>Deletion of Nhlh2 results in a defective torpor response and reduced Beta adrenergic receptor expression in adipose tissue.</title>
        <authorList>
            <person name="Wankhade U.D."/>
            <person name="Vella K.R."/>
            <person name="Fox D.L."/>
            <person name="Good D.J."/>
        </authorList>
    </citation>
    <scope>FUNCTION</scope>
    <scope>DISRUPTION PHENOTYPE</scope>
</reference>
<reference key="16">
    <citation type="journal article" date="2011" name="Mol. Cell. Endocrinol.">
        <title>Melanocortin 4 receptor is a transcriptional target of nescient helix-loop-helix-2.</title>
        <authorList>
            <person name="Wankhade U.D."/>
            <person name="Good D.J."/>
        </authorList>
    </citation>
    <scope>FUNCTION</scope>
</reference>
<reference key="17">
    <citation type="journal article" date="2013" name="J. Neurosci.">
        <title>Loss of NSCL-2 in gonadotropin releasing hormone neurons leads to reduction of pro-opiomelanocortin neurons in specific hypothalamic nuclei and causes visceral obesity.</title>
        <authorList>
            <person name="Schmid T."/>
            <person name="Guenther S."/>
            <person name="Mendler L."/>
            <person name="Braun T."/>
        </authorList>
    </citation>
    <scope>FUNCTION</scope>
    <scope>DISRUPTION PHENOTYPE</scope>
</reference>
<dbReference type="EMBL" id="S40532">
    <property type="protein sequence ID" value="AAB22580.1"/>
    <property type="molecule type" value="mRNA"/>
</dbReference>
<dbReference type="EMBL" id="AK031747">
    <property type="protein sequence ID" value="BAC27535.1"/>
    <property type="molecule type" value="mRNA"/>
</dbReference>
<dbReference type="EMBL" id="AK053837">
    <property type="protein sequence ID" value="BAC35549.1"/>
    <property type="molecule type" value="mRNA"/>
</dbReference>
<dbReference type="EMBL" id="AK079121">
    <property type="protein sequence ID" value="BAC37549.1"/>
    <property type="molecule type" value="mRNA"/>
</dbReference>
<dbReference type="EMBL" id="AK082728">
    <property type="protein sequence ID" value="BAC38590.1"/>
    <property type="molecule type" value="mRNA"/>
</dbReference>
<dbReference type="EMBL" id="AK084160">
    <property type="protein sequence ID" value="BAC39129.1"/>
    <property type="molecule type" value="mRNA"/>
</dbReference>
<dbReference type="EMBL" id="AK140559">
    <property type="protein sequence ID" value="BAE24423.1"/>
    <property type="molecule type" value="mRNA"/>
</dbReference>
<dbReference type="EMBL" id="AC166072">
    <property type="status" value="NOT_ANNOTATED_CDS"/>
    <property type="molecule type" value="Genomic_DNA"/>
</dbReference>
<dbReference type="EMBL" id="CH466608">
    <property type="protein sequence ID" value="EDL07620.1"/>
    <property type="molecule type" value="Genomic_DNA"/>
</dbReference>
<dbReference type="EMBL" id="CH466608">
    <property type="protein sequence ID" value="EDL07621.1"/>
    <property type="molecule type" value="Genomic_DNA"/>
</dbReference>
<dbReference type="EMBL" id="CH466608">
    <property type="protein sequence ID" value="EDL07622.1"/>
    <property type="molecule type" value="Genomic_DNA"/>
</dbReference>
<dbReference type="EMBL" id="BC058413">
    <property type="protein sequence ID" value="AAH58413.1"/>
    <property type="molecule type" value="mRNA"/>
</dbReference>
<dbReference type="CCDS" id="CCDS17685.1"/>
<dbReference type="PIR" id="A49005">
    <property type="entry name" value="A49005"/>
</dbReference>
<dbReference type="RefSeq" id="NP_001415389.1">
    <property type="nucleotide sequence ID" value="NM_001428460.1"/>
</dbReference>
<dbReference type="RefSeq" id="NP_848892.1">
    <property type="nucleotide sequence ID" value="NM_178777.4"/>
</dbReference>
<dbReference type="RefSeq" id="XP_006501175.1">
    <property type="nucleotide sequence ID" value="XM_006501112.2"/>
</dbReference>
<dbReference type="SMR" id="Q64221"/>
<dbReference type="FunCoup" id="Q64221">
    <property type="interactions" value="121"/>
</dbReference>
<dbReference type="IntAct" id="Q64221">
    <property type="interactions" value="1"/>
</dbReference>
<dbReference type="STRING" id="10090.ENSMUSP00000143362"/>
<dbReference type="PhosphoSitePlus" id="Q64221"/>
<dbReference type="PaxDb" id="10090-ENSMUSP00000064355"/>
<dbReference type="ProteomicsDB" id="269590"/>
<dbReference type="Antibodypedia" id="33870">
    <property type="antibodies" value="198 antibodies from 23 providers"/>
</dbReference>
<dbReference type="DNASU" id="18072"/>
<dbReference type="Ensembl" id="ENSMUST00000066187.6">
    <property type="protein sequence ID" value="ENSMUSP00000064355.5"/>
    <property type="gene ID" value="ENSMUSG00000048540.9"/>
</dbReference>
<dbReference type="Ensembl" id="ENSMUST00000196324.2">
    <property type="protein sequence ID" value="ENSMUSP00000142746.2"/>
    <property type="gene ID" value="ENSMUSG00000048540.9"/>
</dbReference>
<dbReference type="Ensembl" id="ENSMUST00000198675.2">
    <property type="protein sequence ID" value="ENSMUSP00000143362.2"/>
    <property type="gene ID" value="ENSMUSG00000048540.9"/>
</dbReference>
<dbReference type="GeneID" id="18072"/>
<dbReference type="KEGG" id="mmu:18072"/>
<dbReference type="UCSC" id="uc008qro.2">
    <property type="organism name" value="mouse"/>
</dbReference>
<dbReference type="AGR" id="MGI:97324"/>
<dbReference type="CTD" id="4808"/>
<dbReference type="MGI" id="MGI:97324">
    <property type="gene designation" value="Nhlh2"/>
</dbReference>
<dbReference type="VEuPathDB" id="HostDB:ENSMUSG00000048540"/>
<dbReference type="eggNOG" id="KOG4029">
    <property type="taxonomic scope" value="Eukaryota"/>
</dbReference>
<dbReference type="GeneTree" id="ENSGT00940000162602"/>
<dbReference type="InParanoid" id="Q64221"/>
<dbReference type="OMA" id="KALGCCA"/>
<dbReference type="OrthoDB" id="10067827at2759"/>
<dbReference type="PhylomeDB" id="Q64221"/>
<dbReference type="BioGRID-ORCS" id="18072">
    <property type="hits" value="2 hits in 77 CRISPR screens"/>
</dbReference>
<dbReference type="ChiTaRS" id="Nhlh2">
    <property type="organism name" value="mouse"/>
</dbReference>
<dbReference type="PRO" id="PR:Q64221"/>
<dbReference type="Proteomes" id="UP000000589">
    <property type="component" value="Chromosome 3"/>
</dbReference>
<dbReference type="RNAct" id="Q64221">
    <property type="molecule type" value="protein"/>
</dbReference>
<dbReference type="Bgee" id="ENSMUSG00000048540">
    <property type="expression patterns" value="Expressed in habenula and 92 other cell types or tissues"/>
</dbReference>
<dbReference type="GO" id="GO:0000785">
    <property type="term" value="C:chromatin"/>
    <property type="evidence" value="ECO:0000314"/>
    <property type="project" value="UniProtKB"/>
</dbReference>
<dbReference type="GO" id="GO:0005634">
    <property type="term" value="C:nucleus"/>
    <property type="evidence" value="ECO:0007669"/>
    <property type="project" value="UniProtKB-SubCell"/>
</dbReference>
<dbReference type="GO" id="GO:0001228">
    <property type="term" value="F:DNA-binding transcription activator activity, RNA polymerase II-specific"/>
    <property type="evidence" value="ECO:0000314"/>
    <property type="project" value="NTNU_SB"/>
</dbReference>
<dbReference type="GO" id="GO:0046983">
    <property type="term" value="F:protein dimerization activity"/>
    <property type="evidence" value="ECO:0007669"/>
    <property type="project" value="InterPro"/>
</dbReference>
<dbReference type="GO" id="GO:0000978">
    <property type="term" value="F:RNA polymerase II cis-regulatory region sequence-specific DNA binding"/>
    <property type="evidence" value="ECO:0000314"/>
    <property type="project" value="NTNU_SB"/>
</dbReference>
<dbReference type="GO" id="GO:0000977">
    <property type="term" value="F:RNA polymerase II transcription regulatory region sequence-specific DNA binding"/>
    <property type="evidence" value="ECO:0000314"/>
    <property type="project" value="UniProtKB"/>
</dbReference>
<dbReference type="GO" id="GO:0061629">
    <property type="term" value="F:RNA polymerase II-specific DNA-binding transcription factor binding"/>
    <property type="evidence" value="ECO:0000353"/>
    <property type="project" value="UniProtKB"/>
</dbReference>
<dbReference type="GO" id="GO:0001223">
    <property type="term" value="F:transcription coactivator binding"/>
    <property type="evidence" value="ECO:0007669"/>
    <property type="project" value="Ensembl"/>
</dbReference>
<dbReference type="GO" id="GO:0006915">
    <property type="term" value="P:apoptotic process"/>
    <property type="evidence" value="ECO:0000316"/>
    <property type="project" value="UniProtKB"/>
</dbReference>
<dbReference type="GO" id="GO:0021535">
    <property type="term" value="P:cell migration in hindbrain"/>
    <property type="evidence" value="ECO:0000316"/>
    <property type="project" value="UniProtKB"/>
</dbReference>
<dbReference type="GO" id="GO:0021888">
    <property type="term" value="P:hypothalamus gonadotrophin-releasing hormone neuron development"/>
    <property type="evidence" value="ECO:0000315"/>
    <property type="project" value="UniProtKB"/>
</dbReference>
<dbReference type="GO" id="GO:0008584">
    <property type="term" value="P:male gonad development"/>
    <property type="evidence" value="ECO:0000315"/>
    <property type="project" value="UniProtKB"/>
</dbReference>
<dbReference type="GO" id="GO:0060179">
    <property type="term" value="P:male mating behavior"/>
    <property type="evidence" value="ECO:0000315"/>
    <property type="project" value="UniProtKB"/>
</dbReference>
<dbReference type="GO" id="GO:0042698">
    <property type="term" value="P:ovulation cycle"/>
    <property type="evidence" value="ECO:0000315"/>
    <property type="project" value="MGI"/>
</dbReference>
<dbReference type="GO" id="GO:0007422">
    <property type="term" value="P:peripheral nervous system development"/>
    <property type="evidence" value="ECO:0000315"/>
    <property type="project" value="UniProtKB"/>
</dbReference>
<dbReference type="GO" id="GO:0045944">
    <property type="term" value="P:positive regulation of transcription by RNA polymerase II"/>
    <property type="evidence" value="ECO:0000314"/>
    <property type="project" value="UniProtKB"/>
</dbReference>
<dbReference type="CDD" id="cd19701">
    <property type="entry name" value="bHLH_TS_HEN1"/>
    <property type="match status" value="1"/>
</dbReference>
<dbReference type="FunFam" id="4.10.280.10:FF:000027">
    <property type="entry name" value="Nescient helix-loop-helix 1"/>
    <property type="match status" value="1"/>
</dbReference>
<dbReference type="Gene3D" id="4.10.280.10">
    <property type="entry name" value="Helix-loop-helix DNA-binding domain"/>
    <property type="match status" value="1"/>
</dbReference>
<dbReference type="InterPro" id="IPR011598">
    <property type="entry name" value="bHLH_dom"/>
</dbReference>
<dbReference type="InterPro" id="IPR036638">
    <property type="entry name" value="HLH_DNA-bd_sf"/>
</dbReference>
<dbReference type="InterPro" id="IPR040238">
    <property type="entry name" value="TAL-like"/>
</dbReference>
<dbReference type="PANTHER" id="PTHR13864:SF19">
    <property type="entry name" value="HELIX-LOOP-HELIX PROTEIN 2"/>
    <property type="match status" value="1"/>
</dbReference>
<dbReference type="PANTHER" id="PTHR13864">
    <property type="entry name" value="T-CELL ACUTE LYMPHOCYTIC LEUKEMIA/STEM CELL LEUKEMIA-RELATED"/>
    <property type="match status" value="1"/>
</dbReference>
<dbReference type="Pfam" id="PF00010">
    <property type="entry name" value="HLH"/>
    <property type="match status" value="1"/>
</dbReference>
<dbReference type="SMART" id="SM00353">
    <property type="entry name" value="HLH"/>
    <property type="match status" value="1"/>
</dbReference>
<dbReference type="SUPFAM" id="SSF47459">
    <property type="entry name" value="HLH, helix-loop-helix DNA-binding domain"/>
    <property type="match status" value="1"/>
</dbReference>
<dbReference type="PROSITE" id="PS50888">
    <property type="entry name" value="BHLH"/>
    <property type="match status" value="1"/>
</dbReference>
<proteinExistence type="evidence at protein level"/>
<feature type="chain" id="PRO_0000127200" description="Helix-loop-helix protein 2">
    <location>
        <begin position="1"/>
        <end position="135"/>
    </location>
</feature>
<feature type="domain" description="bHLH" evidence="2">
    <location>
        <begin position="77"/>
        <end position="129"/>
    </location>
</feature>
<feature type="region of interest" description="Disordered" evidence="3">
    <location>
        <begin position="1"/>
        <end position="81"/>
    </location>
</feature>
<feature type="compositionally biased region" description="Basic and acidic residues" evidence="3">
    <location>
        <begin position="10"/>
        <end position="21"/>
    </location>
</feature>
<feature type="compositionally biased region" description="Basic residues" evidence="3">
    <location>
        <begin position="68"/>
        <end position="81"/>
    </location>
</feature>
<feature type="sequence conflict" description="In Ref. 1; AAB22580." evidence="17" ref="1">
    <original>A</original>
    <variation>V</variation>
    <location>
        <position position="55"/>
    </location>
</feature>
<evidence type="ECO:0000250" key="1">
    <source>
        <dbReference type="UniProtKB" id="Q02577"/>
    </source>
</evidence>
<evidence type="ECO:0000255" key="2">
    <source>
        <dbReference type="PROSITE-ProRule" id="PRU00981"/>
    </source>
</evidence>
<evidence type="ECO:0000256" key="3">
    <source>
        <dbReference type="SAM" id="MobiDB-lite"/>
    </source>
</evidence>
<evidence type="ECO:0000269" key="4">
    <source>
    </source>
</evidence>
<evidence type="ECO:0000269" key="5">
    <source>
    </source>
</evidence>
<evidence type="ECO:0000269" key="6">
    <source>
    </source>
</evidence>
<evidence type="ECO:0000269" key="7">
    <source>
    </source>
</evidence>
<evidence type="ECO:0000269" key="8">
    <source>
    </source>
</evidence>
<evidence type="ECO:0000269" key="9">
    <source>
    </source>
</evidence>
<evidence type="ECO:0000269" key="10">
    <source>
    </source>
</evidence>
<evidence type="ECO:0000269" key="11">
    <source>
    </source>
</evidence>
<evidence type="ECO:0000269" key="12">
    <source>
    </source>
</evidence>
<evidence type="ECO:0000269" key="13">
    <source>
    </source>
</evidence>
<evidence type="ECO:0000269" key="14">
    <source>
    </source>
</evidence>
<evidence type="ECO:0000269" key="15">
    <source>
    </source>
</evidence>
<evidence type="ECO:0000269" key="16">
    <source>
    </source>
</evidence>
<evidence type="ECO:0000305" key="17"/>
<name>HEN2_MOUSE</name>
<accession>Q64221</accession>
<accession>Q8BFV7</accession>
<keyword id="KW-0010">Activator</keyword>
<keyword id="KW-0217">Developmental protein</keyword>
<keyword id="KW-0221">Differentiation</keyword>
<keyword id="KW-0238">DNA-binding</keyword>
<keyword id="KW-0539">Nucleus</keyword>
<keyword id="KW-1185">Reference proteome</keyword>
<keyword id="KW-0804">Transcription</keyword>
<keyword id="KW-0805">Transcription regulation</keyword>
<organism>
    <name type="scientific">Mus musculus</name>
    <name type="common">Mouse</name>
    <dbReference type="NCBI Taxonomy" id="10090"/>
    <lineage>
        <taxon>Eukaryota</taxon>
        <taxon>Metazoa</taxon>
        <taxon>Chordata</taxon>
        <taxon>Craniata</taxon>
        <taxon>Vertebrata</taxon>
        <taxon>Euteleostomi</taxon>
        <taxon>Mammalia</taxon>
        <taxon>Eutheria</taxon>
        <taxon>Euarchontoglires</taxon>
        <taxon>Glires</taxon>
        <taxon>Rodentia</taxon>
        <taxon>Myomorpha</taxon>
        <taxon>Muroidea</taxon>
        <taxon>Muridae</taxon>
        <taxon>Murinae</taxon>
        <taxon>Mus</taxon>
        <taxon>Mus</taxon>
    </lineage>
</organism>
<sequence length="135" mass="15004">MMLSPDQAADSDHPSSTHSDPESLGGADTKVLGSVSDLEPVEEADGDGKGGSRAALYPHPQQLSREEKRRRRRATAKYRSAHATRERIRVEAFNLAFAELRKLLPTLPPDKKLSKIEILRLAICYISYLNHVLDV</sequence>
<comment type="function">
    <text evidence="1 4 5 6 8 9 10 11 12 13 14 16">Transcription factor which binds the E box motif 5'-CA[TC][AG]TG-3' (PubMed:15470499, PubMed:18356286). Involved in regulating energy expenditure, body mass, voluntary physical activity, mating behavior and reproductive longevity, acting through the hypothalamic-pituitary-gonadal axis (PubMed:12419415, PubMed:15465527, PubMed:15470499, PubMed:17717072, PubMed:23785158, PubMed:9090387). Acts as a transcriptional activator of target genes, including Ndn, Pcsk1, Mc4r (PubMed:15470499, PubMed:18356286, PubMed:21664420). Is also a transcriptional activator of KISS1 (By similarity). May act centrally to regulate function of both white and brown adipose tissue (PubMed:19436734, PubMed:20808804). Together with NHLH1, required to maintain migration and survival of cells in the anterior extramural migration stream (aes), which forms the precerebellar nuclei (PubMed:17573818). Also, in concert with Nhlh1, may determine fate of gonadotropin releasing hormone-1 (GnRH-1) neurons (PubMed:15470499).</text>
</comment>
<comment type="subunit">
    <text evidence="10">Homodimer. Interacts and may form heterodimers with STAT3.</text>
</comment>
<comment type="interaction">
    <interactant intactId="EBI-5378529">
        <id>Q64221</id>
    </interactant>
    <interactant intactId="EBI-1802585">
        <id>Q923E4</id>
        <label>Sirt1</label>
    </interactant>
    <organismsDiffer>false</organismsDiffer>
    <experiments>2</experiments>
</comment>
<comment type="subcellular location">
    <subcellularLocation>
        <location evidence="2">Nucleus</location>
    </subcellularLocation>
</comment>
<comment type="tissue specificity">
    <text evidence="7 15 16">Expressed in developing neurons (PubMed:1633105). Transiently expressed in the cerebellum during postnatal development, exclusively in the premigratory zone of the external granule layer where postmitotic neurons undergo initial stages of neuronal differentiation (PubMed:9011755). Expression is not detected in mature neurons (PubMed:9011755). Expressed in the anterior lobe of the adult pituitary (PubMed:9090387).</text>
</comment>
<comment type="developmental stage">
    <text evidence="6 7 8 16">Expressed in embryos at 10.5-13 days post coitus (dpc), including developing ventral hypothalamus, Rathke's pouch and subventricular layers of the developing diencephalon (PubMed:1633105, PubMed:9090387). Expressed in the vomeronasal organ, olfactory epithelium, and vomeronasal nerve fibers at 14.5 to 16.5 dpc (PubMed:15470499). Expressed in various areas of the developing hypothalamus at 18.5 dpc, including the septal areas, the diagonal band of Broca (DBB), within the organum vasculosum lateralis terminalis (OVLT) region, in the paraventricular nucleus (PVN), in lateral areas of the hypothalamus (LH), in the arcuate nucleus (ARC), and in the dorsomedial hypothalamic nucleus (DMH) (PubMed:15470499). Also expressed in the developing pons from 14.5 dpc onwards, including the pontine and reticulotegmental nuclei (PubMed:17573818).</text>
</comment>
<comment type="disruption phenotype">
    <text evidence="4 5 6 8 9 10 11 12 14 16">Disruption of the hypothalamic-pituitary axis in both genders, but female pubertal development is influenced by the presence or absence of male mice (PubMed:17717072, PubMed:9090387). Altered female sexual behavior and reproductive longevity, with fewer pregnancies over a shorter period, abnormal estrous cycles and reduced ovulation with aging (PubMed:15465527). Reduction in neuroendocrine gonadotropin releasing hormone-1 (GnRH-1) cell number and altered location of these cells, and morphological and functional abnormalities of the adenohypophysis (PubMed:15470499, PubMed:17717072). Ndn expression almost abolished at the level of the optic chiasma in the hypothalamus (PubMed:15470499). Hypothalamic Pcsk1 expression does not respond to signals of energy availability (PubMed:18356286). Progressive adult-onset obesity, preceded by reduced physical activity (PubMed:12419415, PubMed:9090387). Significant reduction in the innervation and vascularization of white adipose tissue and accumulation of preadipocyte/macrophage-like cells, prior to onset of obesity (PubMed:19436734). Defective torpor response and altered serum leptin levels, body temperature and adipose inflammation (PubMed:20808804). Conditional knockout in GnRH neurons but not in pro-opiomelanocortin (POMC) neurons reduces POMC neuron number and increases visceral fat mass (PubMed:23785158). Double knockout of Nhlh1 and Nhlh2 genes causes neonatal lethality, complete absence of GnRH-1 neurons in the posterior parts of the brain at 18.5 days post coitus (dpc) and aberrant morphology of the remaining GnRH-1 neurons in the anterior parts of the brain (PubMed:15470499). Double knockout of Nhlh1 and Nhlh2 genes causes absence of pontine nuclei, which belong to the precerebellar nuclei and are located either side of the midline of the ventral rhombencephalon (PubMed:17573818).</text>
</comment>
<comment type="caution">
    <text evidence="6 16">Has been reported to be expressed in Rathke's pouch and the developing pituitary gland (PubMed:9090387). However, a later report found no expression in these tissues and speculated that earlier results may represent cross-hybridization with the very similar Nhlh1 gene (PubMed:15470499).</text>
</comment>
<gene>
    <name type="primary">Nhlh2</name>
    <name type="synonym">Hen2</name>
</gene>